<organism>
    <name type="scientific">Emericella nidulans (strain FGSC A4 / ATCC 38163 / CBS 112.46 / NRRL 194 / M139)</name>
    <name type="common">Aspergillus nidulans</name>
    <dbReference type="NCBI Taxonomy" id="227321"/>
    <lineage>
        <taxon>Eukaryota</taxon>
        <taxon>Fungi</taxon>
        <taxon>Dikarya</taxon>
        <taxon>Ascomycota</taxon>
        <taxon>Pezizomycotina</taxon>
        <taxon>Eurotiomycetes</taxon>
        <taxon>Eurotiomycetidae</taxon>
        <taxon>Eurotiales</taxon>
        <taxon>Aspergillaceae</taxon>
        <taxon>Aspergillus</taxon>
        <taxon>Aspergillus subgen. Nidulantes</taxon>
    </lineage>
</organism>
<accession>Q5AVY9</accession>
<accession>C8VBM7</accession>
<accession>Q1HFR3</accession>
<dbReference type="EC" id="3.1.1.74" evidence="8 9"/>
<dbReference type="EMBL" id="DQ490511">
    <property type="protein sequence ID" value="ABF50887.1"/>
    <property type="molecule type" value="mRNA"/>
</dbReference>
<dbReference type="EMBL" id="AACD01000129">
    <property type="protein sequence ID" value="EAA62121.1"/>
    <property type="status" value="ALT_SEQ"/>
    <property type="molecule type" value="Genomic_DNA"/>
</dbReference>
<dbReference type="EMBL" id="BN001304">
    <property type="protein sequence ID" value="CBF79598.1"/>
    <property type="status" value="ALT_SEQ"/>
    <property type="molecule type" value="Genomic_DNA"/>
</dbReference>
<dbReference type="RefSeq" id="XP_680810.1">
    <property type="nucleotide sequence ID" value="XM_675718.1"/>
</dbReference>
<dbReference type="SMR" id="Q5AVY9"/>
<dbReference type="STRING" id="227321.Q5AVY9"/>
<dbReference type="ESTHER" id="emeni-q5avy9">
    <property type="family name" value="Cutinase"/>
</dbReference>
<dbReference type="KEGG" id="ani:ANIA_07541"/>
<dbReference type="VEuPathDB" id="FungiDB:AN7541"/>
<dbReference type="eggNOG" id="ENOG502SI38">
    <property type="taxonomic scope" value="Eukaryota"/>
</dbReference>
<dbReference type="HOGENOM" id="CLU_040058_2_0_1"/>
<dbReference type="InParanoid" id="Q5AVY9"/>
<dbReference type="OrthoDB" id="3225429at2759"/>
<dbReference type="BioCyc" id="MetaCyc:MONOMER-17223"/>
<dbReference type="BRENDA" id="3.1.1.74">
    <property type="organism ID" value="517"/>
</dbReference>
<dbReference type="Proteomes" id="UP000000560">
    <property type="component" value="Chromosome IV"/>
</dbReference>
<dbReference type="GO" id="GO:0005576">
    <property type="term" value="C:extracellular region"/>
    <property type="evidence" value="ECO:0007669"/>
    <property type="project" value="UniProtKB-SubCell"/>
</dbReference>
<dbReference type="GO" id="GO:0050525">
    <property type="term" value="F:cutinase activity"/>
    <property type="evidence" value="ECO:0000314"/>
    <property type="project" value="UniProtKB"/>
</dbReference>
<dbReference type="GO" id="GO:0016052">
    <property type="term" value="P:carbohydrate catabolic process"/>
    <property type="evidence" value="ECO:0000314"/>
    <property type="project" value="UniProtKB"/>
</dbReference>
<dbReference type="FunFam" id="3.40.50.1820:FF:000235">
    <property type="entry name" value="Cutinase 1"/>
    <property type="match status" value="1"/>
</dbReference>
<dbReference type="Gene3D" id="3.40.50.1820">
    <property type="entry name" value="alpha/beta hydrolase"/>
    <property type="match status" value="1"/>
</dbReference>
<dbReference type="InterPro" id="IPR029058">
    <property type="entry name" value="AB_hydrolase_fold"/>
</dbReference>
<dbReference type="InterPro" id="IPR000675">
    <property type="entry name" value="Cutinase/axe"/>
</dbReference>
<dbReference type="InterPro" id="IPR043580">
    <property type="entry name" value="CUTINASE_1"/>
</dbReference>
<dbReference type="InterPro" id="IPR043579">
    <property type="entry name" value="CUTINASE_2"/>
</dbReference>
<dbReference type="InterPro" id="IPR011150">
    <property type="entry name" value="Cutinase_monf"/>
</dbReference>
<dbReference type="PANTHER" id="PTHR48250:SF3">
    <property type="entry name" value="CUTINASE 1-RELATED"/>
    <property type="match status" value="1"/>
</dbReference>
<dbReference type="PANTHER" id="PTHR48250">
    <property type="entry name" value="CUTINASE 2-RELATED"/>
    <property type="match status" value="1"/>
</dbReference>
<dbReference type="Pfam" id="PF01083">
    <property type="entry name" value="Cutinase"/>
    <property type="match status" value="1"/>
</dbReference>
<dbReference type="PRINTS" id="PR00129">
    <property type="entry name" value="CUTINASE"/>
</dbReference>
<dbReference type="SMART" id="SM01110">
    <property type="entry name" value="Cutinase"/>
    <property type="match status" value="1"/>
</dbReference>
<dbReference type="SUPFAM" id="SSF53474">
    <property type="entry name" value="alpha/beta-Hydrolases"/>
    <property type="match status" value="1"/>
</dbReference>
<dbReference type="PROSITE" id="PS00155">
    <property type="entry name" value="CUTINASE_1"/>
    <property type="match status" value="1"/>
</dbReference>
<dbReference type="PROSITE" id="PS00931">
    <property type="entry name" value="CUTINASE_2"/>
    <property type="match status" value="1"/>
</dbReference>
<protein>
    <recommendedName>
        <fullName evidence="12">Cutinase 2</fullName>
        <ecNumber evidence="8 9">3.1.1.74</ecNumber>
    </recommendedName>
    <alternativeName>
        <fullName evidence="11">Ancut2</fullName>
    </alternativeName>
    <alternativeName>
        <fullName>Cutin hydrolase 2</fullName>
    </alternativeName>
</protein>
<proteinExistence type="evidence at protein level"/>
<name>CUTI2_EMENI</name>
<evidence type="ECO:0000250" key="1">
    <source>
        <dbReference type="UniProtKB" id="P00590"/>
    </source>
</evidence>
<evidence type="ECO:0000250" key="2">
    <source>
        <dbReference type="UniProtKB" id="P11373"/>
    </source>
</evidence>
<evidence type="ECO:0000250" key="3">
    <source>
        <dbReference type="UniProtKB" id="P52956"/>
    </source>
</evidence>
<evidence type="ECO:0000250" key="4">
    <source>
        <dbReference type="UniProtKB" id="Q5B2C1"/>
    </source>
</evidence>
<evidence type="ECO:0000255" key="5"/>
<evidence type="ECO:0000256" key="6">
    <source>
        <dbReference type="SAM" id="MobiDB-lite"/>
    </source>
</evidence>
<evidence type="ECO:0000269" key="7">
    <source>
    </source>
</evidence>
<evidence type="ECO:0000269" key="8">
    <source>
    </source>
</evidence>
<evidence type="ECO:0000269" key="9">
    <source>
    </source>
</evidence>
<evidence type="ECO:0000269" key="10">
    <source>
    </source>
</evidence>
<evidence type="ECO:0000303" key="11">
    <source>
    </source>
</evidence>
<evidence type="ECO:0000303" key="12">
    <source>
    </source>
</evidence>
<evidence type="ECO:0000305" key="13"/>
<comment type="function">
    <text evidence="4 7 8 9">Catalyzes the hydrolysis of complex carboxylic polyesters found in the cell wall of plants (PubMed:16844780, PubMed:22238011, PubMed:28124733). Degrades cutin, a macromolecule that forms the structure of the plant cuticle (PubMed:22238011, PubMed:28124733). Also degrades suberin, a specialized macromolecule found in the cell wall of various plant tissues (By similarity).</text>
</comment>
<comment type="catalytic activity">
    <reaction evidence="8 9">
        <text>cutin + H2O = cutin monomers.</text>
        <dbReference type="EC" id="3.1.1.74"/>
    </reaction>
</comment>
<comment type="activity regulation">
    <text evidence="9">Partially inhibited by the serine protease inhibitor phenylmethanesulfonyl fluoride (PubMed:28124733). Inhibited by various ions, including copper, iron, sodium, potassium, magnesium and calcium (PubMed:28124733). Inhibited by the chelating agent EDTA (ethylenediaminetetraacetic acid) (PubMed:28124733). Inhibited by the surfactants sodium dodecyl sulfate and polysorbate 80 (PubMed:28124733).</text>
</comment>
<comment type="biophysicochemical properties">
    <kinetics>
        <KM evidence="9">6.88 mM for p-nitrophenyl acetate (at pH 9 and 37 degrees Celsius)</KM>
        <text evidence="9">kcat is 242 sec(-1) with p-nitrophenyl acetate as substrate (at pH 9 and 37 degrees Celsius).</text>
    </kinetics>
    <phDependence>
        <text>Optimum pH is 9-10.</text>
    </phDependence>
    <temperatureDependence>
        <text evidence="9">Optimum temperature is 60 degrees Celsius.</text>
    </temperatureDependence>
</comment>
<comment type="subcellular location">
    <subcellularLocation>
        <location evidence="2">Secreted</location>
    </subcellularLocation>
</comment>
<comment type="induction">
    <text evidence="8 10">Induced during growth on cutin, in a manner dependent on transcription factors FarA and FARB (PubMed:30863878). Induced during growth on olive oil (PubMed:22238011, PubMed:30863878). Not induced during growth on the lipidic carbon sources 16-hydroxyhexadecanoic acid and propyl ricinoleate (synthetic cutin monomers), or triacetin and triesterate (triglycerides) (PubMed:30863878). Repressed during growth on glucose and on starch (PubMed:22238011, PubMed:30863878).</text>
</comment>
<comment type="biotechnology">
    <text evidence="9">May be exploited in the production of biodiesel.</text>
</comment>
<comment type="similarity">
    <text evidence="13">Belongs to the cutinase family.</text>
</comment>
<comment type="sequence caution" evidence="13">
    <conflict type="erroneous gene model prediction">
        <sequence resource="EMBL-CDS" id="CBF79598"/>
    </conflict>
</comment>
<comment type="sequence caution" evidence="13">
    <conflict type="erroneous gene model prediction">
        <sequence resource="EMBL-CDS" id="EAA62121"/>
    </conflict>
</comment>
<keyword id="KW-1015">Disulfide bond</keyword>
<keyword id="KW-0378">Hydrolase</keyword>
<keyword id="KW-1185">Reference proteome</keyword>
<keyword id="KW-0964">Secreted</keyword>
<keyword id="KW-0719">Serine esterase</keyword>
<keyword id="KW-0732">Signal</keyword>
<gene>
    <name evidence="11" type="primary">cut2</name>
    <name type="ORF">AN7541</name>
</gene>
<sequence length="255" mass="26074">MHFKLLSLAALAGLSVASPLNLDERQLGSSSGNDLRDGDCKPVTFIFARASTEPGLLGMSTGPAVCNDLKADASLGGVACQGVGPKYTAGLAENALPQGTSSAAINEAKELFELAASKCPDTRIVAGGYSQGTAVMHGAIPDLSDEIKDKIAGVVLFGDTRNKQDGGQIKNFPKDKIKIYCATGDLVCDGTLVVTAAHFTYVANTGEASKWLEQQLASMPASTSTSSSSSSSSSAPASQTSQSSGLSSWFSGLGN</sequence>
<reference key="1">
    <citation type="journal article" date="2006" name="Proc. Natl. Acad. Sci. U.S.A.">
        <title>Development and application of a suite of polysaccharide-degrading enzymes for analyzing plant cell walls.</title>
        <authorList>
            <person name="Bauer S."/>
            <person name="Vasu P."/>
            <person name="Persson S."/>
            <person name="Mort A.J."/>
            <person name="Somerville C.R."/>
        </authorList>
    </citation>
    <scope>NUCLEOTIDE SEQUENCE [MRNA]</scope>
    <scope>FUNCTION</scope>
    <source>
        <strain>FGSC A4 / ATCC 38163 / CBS 112.46 / NRRL 194 / M139</strain>
    </source>
</reference>
<reference key="2">
    <citation type="journal article" date="2005" name="Nature">
        <title>Sequencing of Aspergillus nidulans and comparative analysis with A. fumigatus and A. oryzae.</title>
        <authorList>
            <person name="Galagan J.E."/>
            <person name="Calvo S.E."/>
            <person name="Cuomo C."/>
            <person name="Ma L.-J."/>
            <person name="Wortman J.R."/>
            <person name="Batzoglou S."/>
            <person name="Lee S.-I."/>
            <person name="Bastuerkmen M."/>
            <person name="Spevak C.C."/>
            <person name="Clutterbuck J."/>
            <person name="Kapitonov V."/>
            <person name="Jurka J."/>
            <person name="Scazzocchio C."/>
            <person name="Farman M.L."/>
            <person name="Butler J."/>
            <person name="Purcell S."/>
            <person name="Harris S."/>
            <person name="Braus G.H."/>
            <person name="Draht O."/>
            <person name="Busch S."/>
            <person name="D'Enfert C."/>
            <person name="Bouchier C."/>
            <person name="Goldman G.H."/>
            <person name="Bell-Pedersen D."/>
            <person name="Griffiths-Jones S."/>
            <person name="Doonan J.H."/>
            <person name="Yu J."/>
            <person name="Vienken K."/>
            <person name="Pain A."/>
            <person name="Freitag M."/>
            <person name="Selker E.U."/>
            <person name="Archer D.B."/>
            <person name="Penalva M.A."/>
            <person name="Oakley B.R."/>
            <person name="Momany M."/>
            <person name="Tanaka T."/>
            <person name="Kumagai T."/>
            <person name="Asai K."/>
            <person name="Machida M."/>
            <person name="Nierman W.C."/>
            <person name="Denning D.W."/>
            <person name="Caddick M.X."/>
            <person name="Hynes M."/>
            <person name="Paoletti M."/>
            <person name="Fischer R."/>
            <person name="Miller B.L."/>
            <person name="Dyer P.S."/>
            <person name="Sachs M.S."/>
            <person name="Osmani S.A."/>
            <person name="Birren B.W."/>
        </authorList>
    </citation>
    <scope>NUCLEOTIDE SEQUENCE [LARGE SCALE GENOMIC DNA]</scope>
    <source>
        <strain>FGSC A4 / ATCC 38163 / CBS 112.46 / NRRL 194 / M139</strain>
    </source>
</reference>
<reference key="3">
    <citation type="journal article" date="2009" name="Fungal Genet. Biol.">
        <title>The 2008 update of the Aspergillus nidulans genome annotation: a community effort.</title>
        <authorList>
            <person name="Wortman J.R."/>
            <person name="Gilsenan J.M."/>
            <person name="Joardar V."/>
            <person name="Deegan J."/>
            <person name="Clutterbuck J."/>
            <person name="Andersen M.R."/>
            <person name="Archer D."/>
            <person name="Bencina M."/>
            <person name="Braus G."/>
            <person name="Coutinho P."/>
            <person name="von Dohren H."/>
            <person name="Doonan J."/>
            <person name="Driessen A.J."/>
            <person name="Durek P."/>
            <person name="Espeso E."/>
            <person name="Fekete E."/>
            <person name="Flipphi M."/>
            <person name="Estrada C.G."/>
            <person name="Geysens S."/>
            <person name="Goldman G."/>
            <person name="de Groot P.W."/>
            <person name="Hansen K."/>
            <person name="Harris S.D."/>
            <person name="Heinekamp T."/>
            <person name="Helmstaedt K."/>
            <person name="Henrissat B."/>
            <person name="Hofmann G."/>
            <person name="Homan T."/>
            <person name="Horio T."/>
            <person name="Horiuchi H."/>
            <person name="James S."/>
            <person name="Jones M."/>
            <person name="Karaffa L."/>
            <person name="Karanyi Z."/>
            <person name="Kato M."/>
            <person name="Keller N."/>
            <person name="Kelly D.E."/>
            <person name="Kiel J.A."/>
            <person name="Kim J.M."/>
            <person name="van der Klei I.J."/>
            <person name="Klis F.M."/>
            <person name="Kovalchuk A."/>
            <person name="Krasevec N."/>
            <person name="Kubicek C.P."/>
            <person name="Liu B."/>
            <person name="Maccabe A."/>
            <person name="Meyer V."/>
            <person name="Mirabito P."/>
            <person name="Miskei M."/>
            <person name="Mos M."/>
            <person name="Mullins J."/>
            <person name="Nelson D.R."/>
            <person name="Nielsen J."/>
            <person name="Oakley B.R."/>
            <person name="Osmani S.A."/>
            <person name="Pakula T."/>
            <person name="Paszewski A."/>
            <person name="Paulsen I."/>
            <person name="Pilsyk S."/>
            <person name="Pocsi I."/>
            <person name="Punt P.J."/>
            <person name="Ram A.F."/>
            <person name="Ren Q."/>
            <person name="Robellet X."/>
            <person name="Robson G."/>
            <person name="Seiboth B."/>
            <person name="van Solingen P."/>
            <person name="Specht T."/>
            <person name="Sun J."/>
            <person name="Taheri-Talesh N."/>
            <person name="Takeshita N."/>
            <person name="Ussery D."/>
            <person name="vanKuyk P.A."/>
            <person name="Visser H."/>
            <person name="van de Vondervoort P.J."/>
            <person name="de Vries R.P."/>
            <person name="Walton J."/>
            <person name="Xiang X."/>
            <person name="Xiong Y."/>
            <person name="Zeng A.P."/>
            <person name="Brandt B.W."/>
            <person name="Cornell M.J."/>
            <person name="van den Hondel C.A."/>
            <person name="Visser J."/>
            <person name="Oliver S.G."/>
            <person name="Turner G."/>
        </authorList>
    </citation>
    <scope>GENOME REANNOTATION</scope>
    <source>
        <strain>FGSC A4 / ATCC 38163 / CBS 112.46 / NRRL 194 / M139</strain>
    </source>
</reference>
<reference key="4">
    <citation type="journal article" date="2012" name="Appl. Biochem. Biotechnol.">
        <title>ANCUT2, an extracellular cutinase from Aspergillus nidulans induced by olive oil.</title>
        <authorList>
            <person name="Castro-Ochoa D."/>
            <person name="Pena-Montes C."/>
            <person name="Gonzalez-Canto A."/>
            <person name="Alva-Gasca A."/>
            <person name="Esquivel-Bautista R."/>
            <person name="Navarro-Ocana A."/>
            <person name="Farres A."/>
        </authorList>
    </citation>
    <scope>FUNCTION</scope>
    <scope>CATALYTIC ACTIVITY</scope>
    <scope>INDUCTION</scope>
    <scope>IDENTIFICATION BY MASS SPECTROMETRY</scope>
</reference>
<reference key="5">
    <citation type="journal article" date="2017" name="Appl. Biochem. Biotechnol.">
        <title>ANCUT2, a Thermo-alkaline Cutinase from Aspergillus nidulans and Its Potential Applications.</title>
        <authorList>
            <person name="Bermudez-Garcia E."/>
            <person name="Pena-Montes C."/>
            <person name="Castro-Rodriguez J.A."/>
            <person name="Gonzalez-Canto A."/>
            <person name="Navarro-Ocana A."/>
            <person name="Farres A."/>
        </authorList>
    </citation>
    <scope>FUNCTION</scope>
    <scope>CATALYTIC ACTIVITY</scope>
    <scope>ACTIVITY REGULATION</scope>
    <scope>BIOPHYSICOCHEMICAL PROPERTIES</scope>
    <scope>IDENTIFICATION BY MASS SPECTROMETRY</scope>
    <scope>BIOTECHNOLOGY</scope>
</reference>
<reference key="6">
    <citation type="journal article" date="2019" name="Appl. Microbiol. Biotechnol.">
        <title>Regulation of the cutinases expressed by Aspergillus nidulans and evaluation of their role in cutin degradation.</title>
        <authorList>
            <person name="Bermudez-Garcia E."/>
            <person name="Pena-Montes C."/>
            <person name="Martins I."/>
            <person name="Pais J."/>
            <person name="Pereira C.S."/>
            <person name="Sanchez S."/>
            <person name="Farres A."/>
        </authorList>
    </citation>
    <scope>INDUCTION</scope>
</reference>
<feature type="signal peptide" evidence="5">
    <location>
        <begin position="1"/>
        <end position="17"/>
    </location>
</feature>
<feature type="chain" id="PRO_0000395261" description="Cutinase 2">
    <location>
        <begin position="18"/>
        <end position="255"/>
    </location>
</feature>
<feature type="region of interest" description="Disordered" evidence="6">
    <location>
        <begin position="219"/>
        <end position="255"/>
    </location>
</feature>
<feature type="compositionally biased region" description="Low complexity" evidence="6">
    <location>
        <begin position="220"/>
        <end position="255"/>
    </location>
</feature>
<feature type="active site" description="Nucleophile" evidence="1">
    <location>
        <position position="130"/>
    </location>
</feature>
<feature type="active site" evidence="1">
    <location>
        <position position="185"/>
    </location>
</feature>
<feature type="active site" description="Proton donor/acceptor" evidence="1">
    <location>
        <position position="198"/>
    </location>
</feature>
<feature type="site" description="Transition state stabilizer" evidence="1">
    <location>
        <position position="51"/>
    </location>
</feature>
<feature type="site" description="Transition state stabilizer" evidence="1">
    <location>
        <position position="131"/>
    </location>
</feature>
<feature type="disulfide bond" evidence="3">
    <location>
        <begin position="40"/>
        <end position="119"/>
    </location>
</feature>
<feature type="disulfide bond" evidence="3">
    <location>
        <begin position="66"/>
        <end position="80"/>
    </location>
</feature>
<feature type="disulfide bond" evidence="3">
    <location>
        <begin position="181"/>
        <end position="188"/>
    </location>
</feature>